<keyword id="KW-1185">Reference proteome</keyword>
<keyword id="KW-0687">Ribonucleoprotein</keyword>
<keyword id="KW-0689">Ribosomal protein</keyword>
<keyword id="KW-0694">RNA-binding</keyword>
<keyword id="KW-0699">rRNA-binding</keyword>
<proteinExistence type="inferred from homology"/>
<feature type="chain" id="PRO_0000265267" description="Large ribosomal subunit protein uL6">
    <location>
        <begin position="1"/>
        <end position="179"/>
    </location>
</feature>
<accession>Q98PZ7</accession>
<dbReference type="EMBL" id="AL445565">
    <property type="protein sequence ID" value="CAC13745.1"/>
    <property type="molecule type" value="Genomic_DNA"/>
</dbReference>
<dbReference type="PIR" id="D90583">
    <property type="entry name" value="D90583"/>
</dbReference>
<dbReference type="RefSeq" id="WP_010925373.1">
    <property type="nucleotide sequence ID" value="NC_002771.1"/>
</dbReference>
<dbReference type="SMR" id="Q98PZ7"/>
<dbReference type="STRING" id="272635.gene:17577179"/>
<dbReference type="KEGG" id="mpu:MYPU_5720"/>
<dbReference type="eggNOG" id="COG0097">
    <property type="taxonomic scope" value="Bacteria"/>
</dbReference>
<dbReference type="HOGENOM" id="CLU_065464_1_2_14"/>
<dbReference type="BioCyc" id="MPUL272635:G1GT6-585-MONOMER"/>
<dbReference type="Proteomes" id="UP000000528">
    <property type="component" value="Chromosome"/>
</dbReference>
<dbReference type="GO" id="GO:0022625">
    <property type="term" value="C:cytosolic large ribosomal subunit"/>
    <property type="evidence" value="ECO:0007669"/>
    <property type="project" value="TreeGrafter"/>
</dbReference>
<dbReference type="GO" id="GO:0019843">
    <property type="term" value="F:rRNA binding"/>
    <property type="evidence" value="ECO:0007669"/>
    <property type="project" value="UniProtKB-UniRule"/>
</dbReference>
<dbReference type="GO" id="GO:0003735">
    <property type="term" value="F:structural constituent of ribosome"/>
    <property type="evidence" value="ECO:0007669"/>
    <property type="project" value="InterPro"/>
</dbReference>
<dbReference type="GO" id="GO:0002181">
    <property type="term" value="P:cytoplasmic translation"/>
    <property type="evidence" value="ECO:0007669"/>
    <property type="project" value="TreeGrafter"/>
</dbReference>
<dbReference type="FunFam" id="3.90.930.12:FF:000001">
    <property type="entry name" value="50S ribosomal protein L6"/>
    <property type="match status" value="1"/>
</dbReference>
<dbReference type="FunFam" id="3.90.930.12:FF:000002">
    <property type="entry name" value="50S ribosomal protein L6"/>
    <property type="match status" value="1"/>
</dbReference>
<dbReference type="Gene3D" id="3.90.930.12">
    <property type="entry name" value="Ribosomal protein L6, alpha-beta domain"/>
    <property type="match status" value="2"/>
</dbReference>
<dbReference type="HAMAP" id="MF_01365_B">
    <property type="entry name" value="Ribosomal_uL6_B"/>
    <property type="match status" value="1"/>
</dbReference>
<dbReference type="InterPro" id="IPR000702">
    <property type="entry name" value="Ribosomal_uL6-like"/>
</dbReference>
<dbReference type="InterPro" id="IPR036789">
    <property type="entry name" value="Ribosomal_uL6-like_a/b-dom_sf"/>
</dbReference>
<dbReference type="InterPro" id="IPR020040">
    <property type="entry name" value="Ribosomal_uL6_a/b-dom"/>
</dbReference>
<dbReference type="InterPro" id="IPR019906">
    <property type="entry name" value="Ribosomal_uL6_bac-type"/>
</dbReference>
<dbReference type="NCBIfam" id="TIGR03654">
    <property type="entry name" value="L6_bact"/>
    <property type="match status" value="1"/>
</dbReference>
<dbReference type="PANTHER" id="PTHR11655">
    <property type="entry name" value="60S/50S RIBOSOMAL PROTEIN L6/L9"/>
    <property type="match status" value="1"/>
</dbReference>
<dbReference type="PANTHER" id="PTHR11655:SF14">
    <property type="entry name" value="LARGE RIBOSOMAL SUBUNIT PROTEIN UL6M"/>
    <property type="match status" value="1"/>
</dbReference>
<dbReference type="Pfam" id="PF00347">
    <property type="entry name" value="Ribosomal_L6"/>
    <property type="match status" value="2"/>
</dbReference>
<dbReference type="PIRSF" id="PIRSF002162">
    <property type="entry name" value="Ribosomal_L6"/>
    <property type="match status" value="1"/>
</dbReference>
<dbReference type="PRINTS" id="PR00059">
    <property type="entry name" value="RIBOSOMALL6"/>
</dbReference>
<dbReference type="SUPFAM" id="SSF56053">
    <property type="entry name" value="Ribosomal protein L6"/>
    <property type="match status" value="2"/>
</dbReference>
<sequence>MSRVGKRIIQIPSGTEVKIDGSFFEVKGKLGSLSRLFSPFVNIKHENNQISVERLNELKPTKQLHGTTNALIANMVKGVSEGFKKELKIEGVGYKATLKGQNLELAAGYSHPVSLVIPKDLKVEVPKPVNIIISGIDKQVVGEFAAKVRGVRPPSVYSGKGIQYKDEKLRRKEGKKASK</sequence>
<comment type="function">
    <text evidence="1">This protein binds to the 23S rRNA, and is important in its secondary structure. It is located near the subunit interface in the base of the L7/L12 stalk, and near the tRNA binding site of the peptidyltransferase center.</text>
</comment>
<comment type="subunit">
    <text evidence="1">Part of the 50S ribosomal subunit.</text>
</comment>
<comment type="similarity">
    <text evidence="1">Belongs to the universal ribosomal protein uL6 family.</text>
</comment>
<protein>
    <recommendedName>
        <fullName evidence="1">Large ribosomal subunit protein uL6</fullName>
    </recommendedName>
    <alternativeName>
        <fullName evidence="2">50S ribosomal protein L6</fullName>
    </alternativeName>
</protein>
<gene>
    <name evidence="1" type="primary">rplF</name>
    <name type="ordered locus">MYPU_5720</name>
</gene>
<reference key="1">
    <citation type="journal article" date="2001" name="Nucleic Acids Res.">
        <title>The complete genome sequence of the murine respiratory pathogen Mycoplasma pulmonis.</title>
        <authorList>
            <person name="Chambaud I."/>
            <person name="Heilig R."/>
            <person name="Ferris S."/>
            <person name="Barbe V."/>
            <person name="Samson D."/>
            <person name="Galisson F."/>
            <person name="Moszer I."/>
            <person name="Dybvig K."/>
            <person name="Wroblewski H."/>
            <person name="Viari A."/>
            <person name="Rocha E.P.C."/>
            <person name="Blanchard A."/>
        </authorList>
    </citation>
    <scope>NUCLEOTIDE SEQUENCE [LARGE SCALE GENOMIC DNA]</scope>
    <source>
        <strain>UAB CTIP</strain>
    </source>
</reference>
<evidence type="ECO:0000255" key="1">
    <source>
        <dbReference type="HAMAP-Rule" id="MF_01365"/>
    </source>
</evidence>
<evidence type="ECO:0000305" key="2"/>
<name>RL6_MYCPU</name>
<organism>
    <name type="scientific">Mycoplasmopsis pulmonis (strain UAB CTIP)</name>
    <name type="common">Mycoplasma pulmonis</name>
    <dbReference type="NCBI Taxonomy" id="272635"/>
    <lineage>
        <taxon>Bacteria</taxon>
        <taxon>Bacillati</taxon>
        <taxon>Mycoplasmatota</taxon>
        <taxon>Mycoplasmoidales</taxon>
        <taxon>Metamycoplasmataceae</taxon>
        <taxon>Mycoplasmopsis</taxon>
    </lineage>
</organism>